<evidence type="ECO:0000255" key="1">
    <source>
        <dbReference type="HAMAP-Rule" id="MF_01508"/>
    </source>
</evidence>
<evidence type="ECO:0000256" key="2">
    <source>
        <dbReference type="SAM" id="MobiDB-lite"/>
    </source>
</evidence>
<dbReference type="EMBL" id="AE009439">
    <property type="protein sequence ID" value="AAM01222.1"/>
    <property type="molecule type" value="Genomic_DNA"/>
</dbReference>
<dbReference type="RefSeq" id="WP_011018377.1">
    <property type="nucleotide sequence ID" value="NC_003551.1"/>
</dbReference>
<dbReference type="SMR" id="Q8TZC5"/>
<dbReference type="FunCoup" id="Q8TZC5">
    <property type="interactions" value="10"/>
</dbReference>
<dbReference type="STRING" id="190192.MK0005"/>
<dbReference type="PaxDb" id="190192-MK0005"/>
<dbReference type="EnsemblBacteria" id="AAM01222">
    <property type="protein sequence ID" value="AAM01222"/>
    <property type="gene ID" value="MK0005"/>
</dbReference>
<dbReference type="GeneID" id="1477307"/>
<dbReference type="KEGG" id="mka:MK0005"/>
<dbReference type="PATRIC" id="fig|190192.8.peg.5"/>
<dbReference type="HOGENOM" id="CLU_027255_1_1_2"/>
<dbReference type="InParanoid" id="Q8TZC5"/>
<dbReference type="OrthoDB" id="8658at2157"/>
<dbReference type="Proteomes" id="UP000001826">
    <property type="component" value="Chromosome"/>
</dbReference>
<dbReference type="GO" id="GO:0005524">
    <property type="term" value="F:ATP binding"/>
    <property type="evidence" value="ECO:0007669"/>
    <property type="project" value="UniProtKB-UniRule"/>
</dbReference>
<dbReference type="GO" id="GO:0016887">
    <property type="term" value="F:ATP hydrolysis activity"/>
    <property type="evidence" value="ECO:0007669"/>
    <property type="project" value="InterPro"/>
</dbReference>
<dbReference type="GO" id="GO:0003689">
    <property type="term" value="F:DNA clamp loader activity"/>
    <property type="evidence" value="ECO:0007669"/>
    <property type="project" value="UniProtKB-UniRule"/>
</dbReference>
<dbReference type="GO" id="GO:0006260">
    <property type="term" value="P:DNA replication"/>
    <property type="evidence" value="ECO:0007669"/>
    <property type="project" value="UniProtKB-UniRule"/>
</dbReference>
<dbReference type="CDD" id="cd00009">
    <property type="entry name" value="AAA"/>
    <property type="match status" value="1"/>
</dbReference>
<dbReference type="CDD" id="cd18140">
    <property type="entry name" value="HLD_clamp_RFC"/>
    <property type="match status" value="1"/>
</dbReference>
<dbReference type="Gene3D" id="1.10.8.60">
    <property type="match status" value="1"/>
</dbReference>
<dbReference type="Gene3D" id="3.40.50.300">
    <property type="entry name" value="P-loop containing nucleotide triphosphate hydrolases"/>
    <property type="match status" value="1"/>
</dbReference>
<dbReference type="HAMAP" id="MF_01508">
    <property type="entry name" value="RfcL"/>
    <property type="match status" value="1"/>
</dbReference>
<dbReference type="InterPro" id="IPR003593">
    <property type="entry name" value="AAA+_ATPase"/>
</dbReference>
<dbReference type="InterPro" id="IPR003959">
    <property type="entry name" value="ATPase_AAA_core"/>
</dbReference>
<dbReference type="InterPro" id="IPR027417">
    <property type="entry name" value="P-loop_NTPase"/>
</dbReference>
<dbReference type="InterPro" id="IPR023935">
    <property type="entry name" value="Rep_factor-C_lsu"/>
</dbReference>
<dbReference type="InterPro" id="IPR047854">
    <property type="entry name" value="RFC_lid"/>
</dbReference>
<dbReference type="NCBIfam" id="NF003229">
    <property type="entry name" value="PRK04195.1-5"/>
    <property type="match status" value="1"/>
</dbReference>
<dbReference type="PANTHER" id="PTHR23389">
    <property type="entry name" value="CHROMOSOME TRANSMISSION FIDELITY FACTOR 18"/>
    <property type="match status" value="1"/>
</dbReference>
<dbReference type="PANTHER" id="PTHR23389:SF6">
    <property type="entry name" value="REPLICATION FACTOR C SUBUNIT 1"/>
    <property type="match status" value="1"/>
</dbReference>
<dbReference type="Pfam" id="PF00004">
    <property type="entry name" value="AAA"/>
    <property type="match status" value="1"/>
</dbReference>
<dbReference type="Pfam" id="PF21960">
    <property type="entry name" value="RCF1-5-like_lid"/>
    <property type="match status" value="1"/>
</dbReference>
<dbReference type="SMART" id="SM00382">
    <property type="entry name" value="AAA"/>
    <property type="match status" value="1"/>
</dbReference>
<dbReference type="SUPFAM" id="SSF52540">
    <property type="entry name" value="P-loop containing nucleoside triphosphate hydrolases"/>
    <property type="match status" value="1"/>
</dbReference>
<gene>
    <name evidence="1" type="primary">rfcL</name>
    <name type="ordered locus">MK0005</name>
</gene>
<protein>
    <recommendedName>
        <fullName evidence="1">Replication factor C large subunit</fullName>
        <shortName evidence="1">RFC large subunit</shortName>
    </recommendedName>
    <alternativeName>
        <fullName evidence="1">Clamp loader large subunit</fullName>
    </alternativeName>
</protein>
<comment type="function">
    <text evidence="1">Part of the RFC clamp loader complex which loads the PCNA sliding clamp onto DNA.</text>
</comment>
<comment type="subunit">
    <text evidence="1">Heteromultimer composed of small subunits (RfcS) and large subunits (RfcL).</text>
</comment>
<comment type="similarity">
    <text evidence="1">Belongs to the activator 1 small subunits family. RfcL subfamily.</text>
</comment>
<feature type="chain" id="PRO_0000135953" description="Replication factor C large subunit">
    <location>
        <begin position="1"/>
        <end position="510"/>
    </location>
</feature>
<feature type="region of interest" description="Disordered" evidence="2">
    <location>
        <begin position="459"/>
        <end position="510"/>
    </location>
</feature>
<feature type="compositionally biased region" description="Basic and acidic residues" evidence="2">
    <location>
        <begin position="493"/>
        <end position="510"/>
    </location>
</feature>
<feature type="binding site" evidence="1">
    <location>
        <begin position="48"/>
        <end position="55"/>
    </location>
    <ligand>
        <name>ATP</name>
        <dbReference type="ChEBI" id="CHEBI:30616"/>
    </ligand>
</feature>
<proteinExistence type="inferred from homology"/>
<organism>
    <name type="scientific">Methanopyrus kandleri (strain AV19 / DSM 6324 / JCM 9639 / NBRC 100938)</name>
    <dbReference type="NCBI Taxonomy" id="190192"/>
    <lineage>
        <taxon>Archaea</taxon>
        <taxon>Methanobacteriati</taxon>
        <taxon>Methanobacteriota</taxon>
        <taxon>Methanomada group</taxon>
        <taxon>Methanopyri</taxon>
        <taxon>Methanopyrales</taxon>
        <taxon>Methanopyraceae</taxon>
        <taxon>Methanopyrus</taxon>
    </lineage>
</organism>
<accession>Q8TZC5</accession>
<sequence>MVPWVEKYRPRSLKELVNQDEAKKELAAWANEWARGSIPEPRAVLLHGPPGTGKTSAAYALAHDFGWDVIELNASDKRTRNVIEKIVGGASTSRSLLRMTREAGGDYEHVEGHSDRVLVLVDEVDGIDPREDRGGVTALTRAVRQARNPMVLVANDPWVLPKSLRDAVRMIEFRRLRVNDIVEALRRICEREGIEYEEVALRRIAKRARGDLRAAINDLEALARPTGRVTSDDVEALGWRDKEITIFEALGRIFNKPPRQARRALWNLDEDPDDVILWIAQNIPRAYRDPEEIARAYDYLSKADVFSSRAIETGDWRFKYVYATDLMTSGVAAARKGKPPGFVRFQPPKILRKLGTTRKEREVRNSIAKKIAERMHVSTRRAKMDVISVLEIAFRKVADNPTDRGLEILGGIAGYLELSKREIGFLCGDPQVAQRVYQRALRVREKLRKIRRERVKGAMESMLERKREESEVEEEAKEIEEAVEKAEEEEEREEKKKEGGGEQRTLDAFF</sequence>
<keyword id="KW-0067">ATP-binding</keyword>
<keyword id="KW-0235">DNA replication</keyword>
<keyword id="KW-0547">Nucleotide-binding</keyword>
<keyword id="KW-1185">Reference proteome</keyword>
<reference key="1">
    <citation type="journal article" date="2002" name="Proc. Natl. Acad. Sci. U.S.A.">
        <title>The complete genome of hyperthermophile Methanopyrus kandleri AV19 and monophyly of archaeal methanogens.</title>
        <authorList>
            <person name="Slesarev A.I."/>
            <person name="Mezhevaya K.V."/>
            <person name="Makarova K.S."/>
            <person name="Polushin N.N."/>
            <person name="Shcherbinina O.V."/>
            <person name="Shakhova V.V."/>
            <person name="Belova G.I."/>
            <person name="Aravind L."/>
            <person name="Natale D.A."/>
            <person name="Rogozin I.B."/>
            <person name="Tatusov R.L."/>
            <person name="Wolf Y.I."/>
            <person name="Stetter K.O."/>
            <person name="Malykh A.G."/>
            <person name="Koonin E.V."/>
            <person name="Kozyavkin S.A."/>
        </authorList>
    </citation>
    <scope>NUCLEOTIDE SEQUENCE [LARGE SCALE GENOMIC DNA]</scope>
    <source>
        <strain>AV19 / DSM 6324 / JCM 9639 / NBRC 100938</strain>
    </source>
</reference>
<name>RFCL_METKA</name>